<comment type="function">
    <text evidence="5">Protein acetyltransferase with dual specificity triggering both N-alpha-acetylation (NTA), with a preference for leucine, methionine, serine, valine and to a lower extent threonine and alanine as substrates (can also use glycine), and epsilon-lysine acetylation (KA) of several plastid proteins.</text>
</comment>
<comment type="catalytic activity">
    <reaction evidence="5">
        <text>an N-terminal L-alpha-aminoacyl-[protein] + acetyl-CoA = N-terminal N(alpha)-acetyl-L-alpha-aminoacyl-[protein] + CoA + H(+)</text>
        <dbReference type="Rhea" id="RHEA:21028"/>
        <dbReference type="Rhea" id="RHEA-COMP:10636"/>
        <dbReference type="Rhea" id="RHEA-COMP:15589"/>
        <dbReference type="ChEBI" id="CHEBI:15378"/>
        <dbReference type="ChEBI" id="CHEBI:57287"/>
        <dbReference type="ChEBI" id="CHEBI:57288"/>
        <dbReference type="ChEBI" id="CHEBI:78597"/>
        <dbReference type="ChEBI" id="CHEBI:78598"/>
    </reaction>
</comment>
<comment type="catalytic activity">
    <reaction evidence="5">
        <text>L-lysyl-[protein] + acetyl-CoA = N(6)-acetyl-L-lysyl-[protein] + CoA + H(+)</text>
        <dbReference type="Rhea" id="RHEA:45948"/>
        <dbReference type="Rhea" id="RHEA-COMP:9752"/>
        <dbReference type="Rhea" id="RHEA-COMP:10731"/>
        <dbReference type="ChEBI" id="CHEBI:15378"/>
        <dbReference type="ChEBI" id="CHEBI:29969"/>
        <dbReference type="ChEBI" id="CHEBI:57287"/>
        <dbReference type="ChEBI" id="CHEBI:57288"/>
        <dbReference type="ChEBI" id="CHEBI:61930"/>
        <dbReference type="EC" id="2.3.1.48"/>
    </reaction>
</comment>
<comment type="catalytic activity">
    <reaction evidence="5">
        <text>N-terminal L-methionyl-[protein] + acetyl-CoA = N-terminal N(alpha)-acetyl-L-methionyl-[protein] + CoA + H(+)</text>
        <dbReference type="Rhea" id="RHEA:75239"/>
        <dbReference type="Rhea" id="RHEA-COMP:18493"/>
        <dbReference type="Rhea" id="RHEA-COMP:18494"/>
        <dbReference type="ChEBI" id="CHEBI:15378"/>
        <dbReference type="ChEBI" id="CHEBI:57287"/>
        <dbReference type="ChEBI" id="CHEBI:57288"/>
        <dbReference type="ChEBI" id="CHEBI:64731"/>
        <dbReference type="ChEBI" id="CHEBI:133414"/>
    </reaction>
</comment>
<comment type="catalytic activity">
    <reaction evidence="5">
        <text>N-terminal L-seryl-[protein] + acetyl-CoA = N-terminal N(alpha)-acetyl-L-seryl-[protein] + CoA + H(+)</text>
        <dbReference type="Rhea" id="RHEA:50504"/>
        <dbReference type="Rhea" id="RHEA-COMP:12703"/>
        <dbReference type="Rhea" id="RHEA-COMP:12704"/>
        <dbReference type="ChEBI" id="CHEBI:15378"/>
        <dbReference type="ChEBI" id="CHEBI:57287"/>
        <dbReference type="ChEBI" id="CHEBI:57288"/>
        <dbReference type="ChEBI" id="CHEBI:64738"/>
        <dbReference type="ChEBI" id="CHEBI:83690"/>
        <dbReference type="EC" id="2.3.1.255"/>
    </reaction>
</comment>
<comment type="catalytic activity">
    <reaction evidence="5">
        <text>N-terminal L-valyl-[protein] + acetyl-CoA = N-terminal N(alpha)-acetyl-L-valyl-[protein] + CoA + H(+)</text>
        <dbReference type="Rhea" id="RHEA:50508"/>
        <dbReference type="Rhea" id="RHEA-COMP:12705"/>
        <dbReference type="Rhea" id="RHEA-COMP:12706"/>
        <dbReference type="ChEBI" id="CHEBI:15378"/>
        <dbReference type="ChEBI" id="CHEBI:57287"/>
        <dbReference type="ChEBI" id="CHEBI:57288"/>
        <dbReference type="ChEBI" id="CHEBI:64741"/>
        <dbReference type="ChEBI" id="CHEBI:133371"/>
        <dbReference type="EC" id="2.3.1.255"/>
    </reaction>
</comment>
<comment type="catalytic activity">
    <reaction evidence="5">
        <text>N-terminal L-threonyl-[protein] + acetyl-CoA = N-terminal N(alpha)-acetyl-L-threonyl-[protein] + CoA + H(+)</text>
        <dbReference type="Rhea" id="RHEA:50516"/>
        <dbReference type="Rhea" id="RHEA-COMP:12709"/>
        <dbReference type="Rhea" id="RHEA-COMP:12710"/>
        <dbReference type="ChEBI" id="CHEBI:15378"/>
        <dbReference type="ChEBI" id="CHEBI:57287"/>
        <dbReference type="ChEBI" id="CHEBI:57288"/>
        <dbReference type="ChEBI" id="CHEBI:64739"/>
        <dbReference type="ChEBI" id="CHEBI:133375"/>
        <dbReference type="EC" id="2.3.1.255"/>
    </reaction>
</comment>
<comment type="catalytic activity">
    <reaction evidence="5">
        <text>N-terminal L-alanyl-[protein] + acetyl-CoA = N-terminal N(alpha)-acetyl-L-alanyl-[protein] + CoA + H(+)</text>
        <dbReference type="Rhea" id="RHEA:50500"/>
        <dbReference type="Rhea" id="RHEA-COMP:12701"/>
        <dbReference type="Rhea" id="RHEA-COMP:12702"/>
        <dbReference type="ChEBI" id="CHEBI:15378"/>
        <dbReference type="ChEBI" id="CHEBI:57287"/>
        <dbReference type="ChEBI" id="CHEBI:57288"/>
        <dbReference type="ChEBI" id="CHEBI:64718"/>
        <dbReference type="ChEBI" id="CHEBI:83683"/>
        <dbReference type="EC" id="2.3.1.255"/>
    </reaction>
</comment>
<comment type="catalytic activity">
    <reaction evidence="5">
        <text>N-terminal glycyl-[protein] + acetyl-CoA = N-terminal N(alpha)-acetylglycyl-[protein] + CoA + H(+)</text>
        <dbReference type="Rhea" id="RHEA:50496"/>
        <dbReference type="Rhea" id="RHEA-COMP:12666"/>
        <dbReference type="Rhea" id="RHEA-COMP:12700"/>
        <dbReference type="ChEBI" id="CHEBI:15378"/>
        <dbReference type="ChEBI" id="CHEBI:57287"/>
        <dbReference type="ChEBI" id="CHEBI:57288"/>
        <dbReference type="ChEBI" id="CHEBI:64723"/>
        <dbReference type="ChEBI" id="CHEBI:133369"/>
        <dbReference type="EC" id="2.3.1.255"/>
    </reaction>
</comment>
<comment type="subunit">
    <text evidence="1">Oligomer.</text>
</comment>
<comment type="interaction">
    <interactant intactId="EBI-4426026">
        <id>Q9C7G6</id>
    </interactant>
    <interactant intactId="EBI-4424954">
        <id>Q9M000</id>
        <label>SCL22</label>
    </interactant>
    <organismsDiffer>false</organismsDiffer>
    <experiments>4</experiments>
</comment>
<comment type="subcellular location">
    <subcellularLocation>
        <location evidence="5">Plastid</location>
        <location evidence="5">Chloroplast</location>
    </subcellularLocation>
</comment>
<comment type="tissue specificity">
    <text evidence="5">Expressed in green tissues.</text>
</comment>
<comment type="PTM">
    <text evidence="5">Autoacetylated.</text>
</comment>
<comment type="similarity">
    <text evidence="7">Belongs to the acetyltransferase family. GNAT subfamily.</text>
</comment>
<reference key="1">
    <citation type="journal article" date="2000" name="Nature">
        <title>Sequence and analysis of chromosome 1 of the plant Arabidopsis thaliana.</title>
        <authorList>
            <person name="Theologis A."/>
            <person name="Ecker J.R."/>
            <person name="Palm C.J."/>
            <person name="Federspiel N.A."/>
            <person name="Kaul S."/>
            <person name="White O."/>
            <person name="Alonso J."/>
            <person name="Altafi H."/>
            <person name="Araujo R."/>
            <person name="Bowman C.L."/>
            <person name="Brooks S.Y."/>
            <person name="Buehler E."/>
            <person name="Chan A."/>
            <person name="Chao Q."/>
            <person name="Chen H."/>
            <person name="Cheuk R.F."/>
            <person name="Chin C.W."/>
            <person name="Chung M.K."/>
            <person name="Conn L."/>
            <person name="Conway A.B."/>
            <person name="Conway A.R."/>
            <person name="Creasy T.H."/>
            <person name="Dewar K."/>
            <person name="Dunn P."/>
            <person name="Etgu P."/>
            <person name="Feldblyum T.V."/>
            <person name="Feng J.-D."/>
            <person name="Fong B."/>
            <person name="Fujii C.Y."/>
            <person name="Gill J.E."/>
            <person name="Goldsmith A.D."/>
            <person name="Haas B."/>
            <person name="Hansen N.F."/>
            <person name="Hughes B."/>
            <person name="Huizar L."/>
            <person name="Hunter J.L."/>
            <person name="Jenkins J."/>
            <person name="Johnson-Hopson C."/>
            <person name="Khan S."/>
            <person name="Khaykin E."/>
            <person name="Kim C.J."/>
            <person name="Koo H.L."/>
            <person name="Kremenetskaia I."/>
            <person name="Kurtz D.B."/>
            <person name="Kwan A."/>
            <person name="Lam B."/>
            <person name="Langin-Hooper S."/>
            <person name="Lee A."/>
            <person name="Lee J.M."/>
            <person name="Lenz C.A."/>
            <person name="Li J.H."/>
            <person name="Li Y.-P."/>
            <person name="Lin X."/>
            <person name="Liu S.X."/>
            <person name="Liu Z.A."/>
            <person name="Luros J.S."/>
            <person name="Maiti R."/>
            <person name="Marziali A."/>
            <person name="Militscher J."/>
            <person name="Miranda M."/>
            <person name="Nguyen M."/>
            <person name="Nierman W.C."/>
            <person name="Osborne B.I."/>
            <person name="Pai G."/>
            <person name="Peterson J."/>
            <person name="Pham P.K."/>
            <person name="Rizzo M."/>
            <person name="Rooney T."/>
            <person name="Rowley D."/>
            <person name="Sakano H."/>
            <person name="Salzberg S.L."/>
            <person name="Schwartz J.R."/>
            <person name="Shinn P."/>
            <person name="Southwick A.M."/>
            <person name="Sun H."/>
            <person name="Tallon L.J."/>
            <person name="Tambunga G."/>
            <person name="Toriumi M.J."/>
            <person name="Town C.D."/>
            <person name="Utterback T."/>
            <person name="Van Aken S."/>
            <person name="Vaysberg M."/>
            <person name="Vysotskaia V.S."/>
            <person name="Walker M."/>
            <person name="Wu D."/>
            <person name="Yu G."/>
            <person name="Fraser C.M."/>
            <person name="Venter J.C."/>
            <person name="Davis R.W."/>
        </authorList>
    </citation>
    <scope>NUCLEOTIDE SEQUENCE [LARGE SCALE GENOMIC DNA]</scope>
    <source>
        <strain>cv. Columbia</strain>
    </source>
</reference>
<reference key="2">
    <citation type="journal article" date="2017" name="Plant J.">
        <title>Araport11: a complete reannotation of the Arabidopsis thaliana reference genome.</title>
        <authorList>
            <person name="Cheng C.Y."/>
            <person name="Krishnakumar V."/>
            <person name="Chan A.P."/>
            <person name="Thibaud-Nissen F."/>
            <person name="Schobel S."/>
            <person name="Town C.D."/>
        </authorList>
    </citation>
    <scope>GENOME REANNOTATION</scope>
    <source>
        <strain>cv. Columbia</strain>
    </source>
</reference>
<reference key="3">
    <citation type="journal article" date="2002" name="Science">
        <title>Functional annotation of a full-length Arabidopsis cDNA collection.</title>
        <authorList>
            <person name="Seki M."/>
            <person name="Narusaka M."/>
            <person name="Kamiya A."/>
            <person name="Ishida J."/>
            <person name="Satou M."/>
            <person name="Sakurai T."/>
            <person name="Nakajima M."/>
            <person name="Enju A."/>
            <person name="Akiyama K."/>
            <person name="Oono Y."/>
            <person name="Muramatsu M."/>
            <person name="Hayashizaki Y."/>
            <person name="Kawai J."/>
            <person name="Carninci P."/>
            <person name="Itoh M."/>
            <person name="Ishii Y."/>
            <person name="Arakawa T."/>
            <person name="Shibata K."/>
            <person name="Shinagawa A."/>
            <person name="Shinozaki K."/>
        </authorList>
    </citation>
    <scope>NUCLEOTIDE SEQUENCE [LARGE SCALE MRNA]</scope>
    <source>
        <strain>cv. Columbia</strain>
    </source>
</reference>
<reference key="4">
    <citation type="journal article" date="2003" name="Science">
        <title>Empirical analysis of transcriptional activity in the Arabidopsis genome.</title>
        <authorList>
            <person name="Yamada K."/>
            <person name="Lim J."/>
            <person name="Dale J.M."/>
            <person name="Chen H."/>
            <person name="Shinn P."/>
            <person name="Palm C.J."/>
            <person name="Southwick A.M."/>
            <person name="Wu H.C."/>
            <person name="Kim C.J."/>
            <person name="Nguyen M."/>
            <person name="Pham P.K."/>
            <person name="Cheuk R.F."/>
            <person name="Karlin-Newmann G."/>
            <person name="Liu S.X."/>
            <person name="Lam B."/>
            <person name="Sakano H."/>
            <person name="Wu T."/>
            <person name="Yu G."/>
            <person name="Miranda M."/>
            <person name="Quach H.L."/>
            <person name="Tripp M."/>
            <person name="Chang C.H."/>
            <person name="Lee J.M."/>
            <person name="Toriumi M.J."/>
            <person name="Chan M.M."/>
            <person name="Tang C.C."/>
            <person name="Onodera C.S."/>
            <person name="Deng J.M."/>
            <person name="Akiyama K."/>
            <person name="Ansari Y."/>
            <person name="Arakawa T."/>
            <person name="Banh J."/>
            <person name="Banno F."/>
            <person name="Bowser L."/>
            <person name="Brooks S.Y."/>
            <person name="Carninci P."/>
            <person name="Chao Q."/>
            <person name="Choy N."/>
            <person name="Enju A."/>
            <person name="Goldsmith A.D."/>
            <person name="Gurjal M."/>
            <person name="Hansen N.F."/>
            <person name="Hayashizaki Y."/>
            <person name="Johnson-Hopson C."/>
            <person name="Hsuan V.W."/>
            <person name="Iida K."/>
            <person name="Karnes M."/>
            <person name="Khan S."/>
            <person name="Koesema E."/>
            <person name="Ishida J."/>
            <person name="Jiang P.X."/>
            <person name="Jones T."/>
            <person name="Kawai J."/>
            <person name="Kamiya A."/>
            <person name="Meyers C."/>
            <person name="Nakajima M."/>
            <person name="Narusaka M."/>
            <person name="Seki M."/>
            <person name="Sakurai T."/>
            <person name="Satou M."/>
            <person name="Tamse R."/>
            <person name="Vaysberg M."/>
            <person name="Wallender E.K."/>
            <person name="Wong C."/>
            <person name="Yamamura Y."/>
            <person name="Yuan S."/>
            <person name="Shinozaki K."/>
            <person name="Davis R.W."/>
            <person name="Theologis A."/>
            <person name="Ecker J.R."/>
        </authorList>
    </citation>
    <scope>NUCLEOTIDE SEQUENCE [LARGE SCALE MRNA]</scope>
    <source>
        <strain>cv. Columbia</strain>
    </source>
</reference>
<reference key="5">
    <citation type="journal article" date="2020" name="Mol. Syst. Biol.">
        <title>Dual lysine and N-terminal acetyltransferases reveal the complexity underpinning protein acetylation.</title>
        <authorList>
            <person name="Bienvenut W.V."/>
            <person name="Bruenje A."/>
            <person name="Boyer J.-B."/>
            <person name="Muehlenbeck J.S."/>
            <person name="Bernal G."/>
            <person name="Lassowskat I."/>
            <person name="Dian C."/>
            <person name="Linster E."/>
            <person name="Dinh T.V."/>
            <person name="Koskela M.M."/>
            <person name="Jung V."/>
            <person name="Seidel J."/>
            <person name="Schyrba L.K."/>
            <person name="Ivanauskaite A."/>
            <person name="Eirich J."/>
            <person name="Hell R."/>
            <person name="Schwarzer D."/>
            <person name="Mulo P."/>
            <person name="Wirtz M."/>
            <person name="Meinnel T."/>
            <person name="Giglione C."/>
            <person name="Finkemeier I."/>
        </authorList>
    </citation>
    <scope>FUNCTION</scope>
    <scope>CATALYTIC ACTIVITY</scope>
    <scope>SUBCELLULAR LOCATION</scope>
    <scope>TISSUE SPECIFICITY</scope>
    <scope>AUTOACETYLATION</scope>
    <scope>GENE FAMILY</scope>
    <scope>NOMENCLATURE</scope>
    <source>
        <strain>cv. Columbia</strain>
    </source>
</reference>
<keyword id="KW-0150">Chloroplast</keyword>
<keyword id="KW-0934">Plastid</keyword>
<keyword id="KW-1185">Reference proteome</keyword>
<keyword id="KW-0808">Transferase</keyword>
<keyword id="KW-0809">Transit peptide</keyword>
<protein>
    <recommendedName>
        <fullName evidence="6">GCN5-related N-acetyltransferase 10, chloroplastic</fullName>
        <ecNumber evidence="4 5">2.3.1.255</ecNumber>
        <ecNumber evidence="4 5">2.3.1.48</ecNumber>
    </recommendedName>
</protein>
<feature type="transit peptide" description="Chloroplast" evidence="3">
    <location>
        <begin position="1"/>
        <end position="41"/>
    </location>
</feature>
<feature type="chain" id="PRO_0000457958" description="GCN5-related N-acetyltransferase 10, chloroplastic">
    <location>
        <begin position="42"/>
        <end position="256"/>
    </location>
</feature>
<feature type="domain" description="N-acetyltransferase" evidence="4">
    <location>
        <begin position="106"/>
        <end position="256"/>
    </location>
</feature>
<feature type="active site" description="Proton donor" evidence="2">
    <location>
        <position position="224"/>
    </location>
</feature>
<feature type="binding site" evidence="2">
    <location>
        <begin position="178"/>
        <end position="180"/>
    </location>
    <ligand>
        <name>acetyl-CoA</name>
        <dbReference type="ChEBI" id="CHEBI:57288"/>
    </ligand>
</feature>
<feature type="binding site" evidence="2">
    <location>
        <begin position="186"/>
        <end position="191"/>
    </location>
    <ligand>
        <name>acetyl-CoA</name>
        <dbReference type="ChEBI" id="CHEBI:57288"/>
    </ligand>
</feature>
<feature type="binding site" evidence="2">
    <location>
        <begin position="217"/>
        <end position="219"/>
    </location>
    <ligand>
        <name>acetyl-CoA</name>
        <dbReference type="ChEBI" id="CHEBI:57288"/>
    </ligand>
</feature>
<feature type="binding site" evidence="2">
    <location>
        <position position="224"/>
    </location>
    <ligand>
        <name>acetyl-CoA</name>
        <dbReference type="ChEBI" id="CHEBI:57288"/>
    </ligand>
</feature>
<sequence>MGHLPQSLYSAAGPKFPYPGSSGLGVDQRKLTWSRFPVFLRCASTESLTSLTQNNAAEIELKYLVSQHGWDVRRLNRDDEDEIRRVSLVQAEAFHIPLALFDDFFFMFFQAEVLSALLYKLKNSPPDRYACLVAEQTSETETLSSSSVVGVVDVTAQTESSVLRYFPGVEEYLYVSGLAVSKSQRRKKMASTLLKACDVLCYLWGFKLLALRAYEDDAAARNLYSNAGYSVVETDPLWTSTWIGRKRRVLMSKRFS</sequence>
<name>GNT10_ARATH</name>
<proteinExistence type="evidence at protein level"/>
<dbReference type="EC" id="2.3.1.255" evidence="4 5"/>
<dbReference type="EC" id="2.3.1.48" evidence="4 5"/>
<dbReference type="EMBL" id="AC069273">
    <property type="protein sequence ID" value="AAG51142.1"/>
    <property type="molecule type" value="Genomic_DNA"/>
</dbReference>
<dbReference type="EMBL" id="CP002684">
    <property type="protein sequence ID" value="AEE35265.1"/>
    <property type="molecule type" value="Genomic_DNA"/>
</dbReference>
<dbReference type="EMBL" id="AK118059">
    <property type="protein sequence ID" value="BAC42690.1"/>
    <property type="molecule type" value="mRNA"/>
</dbReference>
<dbReference type="EMBL" id="BT005573">
    <property type="protein sequence ID" value="AAO63993.1"/>
    <property type="molecule type" value="mRNA"/>
</dbReference>
<dbReference type="PIR" id="D96743">
    <property type="entry name" value="D96743"/>
</dbReference>
<dbReference type="RefSeq" id="NP_177348.1">
    <property type="nucleotide sequence ID" value="NM_105861.4"/>
</dbReference>
<dbReference type="SMR" id="Q9C7G6"/>
<dbReference type="FunCoup" id="Q9C7G6">
    <property type="interactions" value="146"/>
</dbReference>
<dbReference type="IntAct" id="Q9C7G6">
    <property type="interactions" value="10"/>
</dbReference>
<dbReference type="STRING" id="3702.Q9C7G6"/>
<dbReference type="PaxDb" id="3702-AT1G72030.1"/>
<dbReference type="ProteomicsDB" id="189395"/>
<dbReference type="EnsemblPlants" id="AT1G72030.1">
    <property type="protein sequence ID" value="AT1G72030.1"/>
    <property type="gene ID" value="AT1G72030"/>
</dbReference>
<dbReference type="GeneID" id="843534"/>
<dbReference type="Gramene" id="AT1G72030.1">
    <property type="protein sequence ID" value="AT1G72030.1"/>
    <property type="gene ID" value="AT1G72030"/>
</dbReference>
<dbReference type="KEGG" id="ath:AT1G72030"/>
<dbReference type="Araport" id="AT1G72030"/>
<dbReference type="TAIR" id="AT1G72030"/>
<dbReference type="eggNOG" id="ENOG502QSHD">
    <property type="taxonomic scope" value="Eukaryota"/>
</dbReference>
<dbReference type="HOGENOM" id="CLU_082028_1_0_1"/>
<dbReference type="InParanoid" id="Q9C7G6"/>
<dbReference type="OMA" id="LPIHEHH"/>
<dbReference type="PRO" id="PR:Q9C7G6"/>
<dbReference type="Proteomes" id="UP000006548">
    <property type="component" value="Chromosome 1"/>
</dbReference>
<dbReference type="ExpressionAtlas" id="Q9C7G6">
    <property type="expression patterns" value="baseline and differential"/>
</dbReference>
<dbReference type="GO" id="GO:0009507">
    <property type="term" value="C:chloroplast"/>
    <property type="evidence" value="ECO:0000314"/>
    <property type="project" value="TAIR"/>
</dbReference>
<dbReference type="GO" id="GO:0008080">
    <property type="term" value="F:N-acetyltransferase activity"/>
    <property type="evidence" value="ECO:0000314"/>
    <property type="project" value="UniProtKB"/>
</dbReference>
<dbReference type="GO" id="GO:0006474">
    <property type="term" value="P:N-terminal protein amino acid acetylation"/>
    <property type="evidence" value="ECO:0000314"/>
    <property type="project" value="UniProtKB"/>
</dbReference>
<dbReference type="GO" id="GO:0018394">
    <property type="term" value="P:peptidyl-lysine acetylation"/>
    <property type="evidence" value="ECO:0000314"/>
    <property type="project" value="UniProtKB"/>
</dbReference>
<dbReference type="FunFam" id="3.40.630.30:FF:000097">
    <property type="entry name" value="Histone acetyltransferase HPA2 and related acetyltransferases"/>
    <property type="match status" value="1"/>
</dbReference>
<dbReference type="Gene3D" id="3.40.630.30">
    <property type="match status" value="1"/>
</dbReference>
<dbReference type="InterPro" id="IPR016181">
    <property type="entry name" value="Acyl_CoA_acyltransferase"/>
</dbReference>
<dbReference type="InterPro" id="IPR000182">
    <property type="entry name" value="GNAT_dom"/>
</dbReference>
<dbReference type="InterPro" id="IPR051556">
    <property type="entry name" value="N-term/lysine_N-AcTrnsfr"/>
</dbReference>
<dbReference type="PANTHER" id="PTHR42919:SF20">
    <property type="entry name" value="GCN5-RELATED N-ACETYLTRANSFERASE 10, CHLOROPLASTIC"/>
    <property type="match status" value="1"/>
</dbReference>
<dbReference type="PANTHER" id="PTHR42919">
    <property type="entry name" value="N-ALPHA-ACETYLTRANSFERASE"/>
    <property type="match status" value="1"/>
</dbReference>
<dbReference type="Pfam" id="PF00583">
    <property type="entry name" value="Acetyltransf_1"/>
    <property type="match status" value="1"/>
</dbReference>
<dbReference type="SUPFAM" id="SSF55729">
    <property type="entry name" value="Acyl-CoA N-acyltransferases (Nat)"/>
    <property type="match status" value="1"/>
</dbReference>
<dbReference type="PROSITE" id="PS51186">
    <property type="entry name" value="GNAT"/>
    <property type="match status" value="1"/>
</dbReference>
<gene>
    <name evidence="6" type="primary">GNAT10</name>
    <name evidence="8" type="ordered locus">At1g72030</name>
    <name evidence="9" type="ORF">F28P5.8</name>
</gene>
<evidence type="ECO:0000250" key="1">
    <source>
        <dbReference type="UniProtKB" id="Q7X9V3"/>
    </source>
</evidence>
<evidence type="ECO:0000250" key="2">
    <source>
        <dbReference type="UniProtKB" id="Q96F10"/>
    </source>
</evidence>
<evidence type="ECO:0000255" key="3"/>
<evidence type="ECO:0000255" key="4">
    <source>
        <dbReference type="PROSITE-ProRule" id="PRU00532"/>
    </source>
</evidence>
<evidence type="ECO:0000269" key="5">
    <source>
    </source>
</evidence>
<evidence type="ECO:0000303" key="6">
    <source>
    </source>
</evidence>
<evidence type="ECO:0000305" key="7"/>
<evidence type="ECO:0000312" key="8">
    <source>
        <dbReference type="Araport" id="AT1G72030"/>
    </source>
</evidence>
<evidence type="ECO:0000312" key="9">
    <source>
        <dbReference type="EMBL" id="AAG51142.1"/>
    </source>
</evidence>
<accession>Q9C7G6</accession>
<organism>
    <name type="scientific">Arabidopsis thaliana</name>
    <name type="common">Mouse-ear cress</name>
    <dbReference type="NCBI Taxonomy" id="3702"/>
    <lineage>
        <taxon>Eukaryota</taxon>
        <taxon>Viridiplantae</taxon>
        <taxon>Streptophyta</taxon>
        <taxon>Embryophyta</taxon>
        <taxon>Tracheophyta</taxon>
        <taxon>Spermatophyta</taxon>
        <taxon>Magnoliopsida</taxon>
        <taxon>eudicotyledons</taxon>
        <taxon>Gunneridae</taxon>
        <taxon>Pentapetalae</taxon>
        <taxon>rosids</taxon>
        <taxon>malvids</taxon>
        <taxon>Brassicales</taxon>
        <taxon>Brassicaceae</taxon>
        <taxon>Camelineae</taxon>
        <taxon>Arabidopsis</taxon>
    </lineage>
</organism>